<reference key="1">
    <citation type="journal article" date="2008" name="DNA Res.">
        <title>Determination of the genome sequence of Porphyromonas gingivalis strain ATCC 33277 and genomic comparison with strain W83 revealed extensive genome rearrangements in P. gingivalis.</title>
        <authorList>
            <person name="Naito M."/>
            <person name="Hirakawa H."/>
            <person name="Yamashita A."/>
            <person name="Ohara N."/>
            <person name="Shoji M."/>
            <person name="Yukitake H."/>
            <person name="Nakayama K."/>
            <person name="Toh H."/>
            <person name="Yoshimura F."/>
            <person name="Kuhara S."/>
            <person name="Hattori M."/>
            <person name="Hayashi T."/>
            <person name="Nakayama K."/>
        </authorList>
    </citation>
    <scope>NUCLEOTIDE SEQUENCE [LARGE SCALE GENOMIC DNA]</scope>
    <source>
        <strain>ATCC 33277 / DSM 20709 / CIP 103683 / JCM 12257 / NCTC 11834 / 2561</strain>
    </source>
</reference>
<accession>B2RJH1</accession>
<organism>
    <name type="scientific">Porphyromonas gingivalis (strain ATCC 33277 / DSM 20709 / CIP 103683 / JCM 12257 / NCTC 11834 / 2561)</name>
    <dbReference type="NCBI Taxonomy" id="431947"/>
    <lineage>
        <taxon>Bacteria</taxon>
        <taxon>Pseudomonadati</taxon>
        <taxon>Bacteroidota</taxon>
        <taxon>Bacteroidia</taxon>
        <taxon>Bacteroidales</taxon>
        <taxon>Porphyromonadaceae</taxon>
        <taxon>Porphyromonas</taxon>
    </lineage>
</organism>
<protein>
    <recommendedName>
        <fullName evidence="1">Deoxyuridine 5'-triphosphate nucleotidohydrolase</fullName>
        <shortName evidence="1">dUTPase</shortName>
        <ecNumber evidence="1">3.6.1.23</ecNumber>
    </recommendedName>
    <alternativeName>
        <fullName evidence="1">dUTP pyrophosphatase</fullName>
    </alternativeName>
</protein>
<gene>
    <name evidence="1" type="primary">dut</name>
    <name type="ordered locus">PGN_0997</name>
</gene>
<sequence length="144" mass="15736">MKIKIINRSHHPLPAYATSASAGMDLRASIEEPITLLPLERRLIPTGLFIELPVGYEAQIRPRSGLALRHGITLVNSPGTIDADYRGEIGIIMINLSNTPFTIADGERICQLVIARHEQAEWVLTDELADTERGAGGFGHTGKE</sequence>
<comment type="function">
    <text evidence="1">This enzyme is involved in nucleotide metabolism: it produces dUMP, the immediate precursor of thymidine nucleotides and it decreases the intracellular concentration of dUTP so that uracil cannot be incorporated into DNA.</text>
</comment>
<comment type="catalytic activity">
    <reaction evidence="1">
        <text>dUTP + H2O = dUMP + diphosphate + H(+)</text>
        <dbReference type="Rhea" id="RHEA:10248"/>
        <dbReference type="ChEBI" id="CHEBI:15377"/>
        <dbReference type="ChEBI" id="CHEBI:15378"/>
        <dbReference type="ChEBI" id="CHEBI:33019"/>
        <dbReference type="ChEBI" id="CHEBI:61555"/>
        <dbReference type="ChEBI" id="CHEBI:246422"/>
        <dbReference type="EC" id="3.6.1.23"/>
    </reaction>
</comment>
<comment type="cofactor">
    <cofactor evidence="1">
        <name>Mg(2+)</name>
        <dbReference type="ChEBI" id="CHEBI:18420"/>
    </cofactor>
</comment>
<comment type="pathway">
    <text evidence="1">Pyrimidine metabolism; dUMP biosynthesis; dUMP from dCTP (dUTP route): step 2/2.</text>
</comment>
<comment type="similarity">
    <text evidence="1">Belongs to the dUTPase family.</text>
</comment>
<keyword id="KW-0378">Hydrolase</keyword>
<keyword id="KW-0460">Magnesium</keyword>
<keyword id="KW-0479">Metal-binding</keyword>
<keyword id="KW-0546">Nucleotide metabolism</keyword>
<name>DUT_PORG3</name>
<feature type="chain" id="PRO_1000094978" description="Deoxyuridine 5'-triphosphate nucleotidohydrolase">
    <location>
        <begin position="1"/>
        <end position="144"/>
    </location>
</feature>
<feature type="binding site" evidence="1">
    <location>
        <begin position="63"/>
        <end position="65"/>
    </location>
    <ligand>
        <name>substrate</name>
    </ligand>
</feature>
<feature type="binding site" evidence="1">
    <location>
        <position position="76"/>
    </location>
    <ligand>
        <name>substrate</name>
    </ligand>
</feature>
<feature type="binding site" evidence="1">
    <location>
        <begin position="80"/>
        <end position="82"/>
    </location>
    <ligand>
        <name>substrate</name>
    </ligand>
</feature>
<proteinExistence type="inferred from homology"/>
<evidence type="ECO:0000255" key="1">
    <source>
        <dbReference type="HAMAP-Rule" id="MF_00116"/>
    </source>
</evidence>
<dbReference type="EC" id="3.6.1.23" evidence="1"/>
<dbReference type="EMBL" id="AP009380">
    <property type="protein sequence ID" value="BAG33516.1"/>
    <property type="molecule type" value="Genomic_DNA"/>
</dbReference>
<dbReference type="RefSeq" id="WP_012457944.1">
    <property type="nucleotide sequence ID" value="NZ_CP025930.1"/>
</dbReference>
<dbReference type="SMR" id="B2RJH1"/>
<dbReference type="GeneID" id="29256208"/>
<dbReference type="KEGG" id="pgn:PGN_0997"/>
<dbReference type="eggNOG" id="COG0756">
    <property type="taxonomic scope" value="Bacteria"/>
</dbReference>
<dbReference type="HOGENOM" id="CLU_068508_1_2_10"/>
<dbReference type="OrthoDB" id="9809956at2"/>
<dbReference type="BioCyc" id="PGIN431947:G1G2V-1123-MONOMER"/>
<dbReference type="UniPathway" id="UPA00610">
    <property type="reaction ID" value="UER00666"/>
</dbReference>
<dbReference type="Proteomes" id="UP000008842">
    <property type="component" value="Chromosome"/>
</dbReference>
<dbReference type="GO" id="GO:0004170">
    <property type="term" value="F:dUTP diphosphatase activity"/>
    <property type="evidence" value="ECO:0007669"/>
    <property type="project" value="UniProtKB-UniRule"/>
</dbReference>
<dbReference type="GO" id="GO:0000287">
    <property type="term" value="F:magnesium ion binding"/>
    <property type="evidence" value="ECO:0007669"/>
    <property type="project" value="UniProtKB-UniRule"/>
</dbReference>
<dbReference type="GO" id="GO:0006226">
    <property type="term" value="P:dUMP biosynthetic process"/>
    <property type="evidence" value="ECO:0007669"/>
    <property type="project" value="UniProtKB-UniRule"/>
</dbReference>
<dbReference type="GO" id="GO:0046081">
    <property type="term" value="P:dUTP catabolic process"/>
    <property type="evidence" value="ECO:0007669"/>
    <property type="project" value="InterPro"/>
</dbReference>
<dbReference type="CDD" id="cd07557">
    <property type="entry name" value="trimeric_dUTPase"/>
    <property type="match status" value="1"/>
</dbReference>
<dbReference type="FunFam" id="2.70.40.10:FF:000002">
    <property type="entry name" value="dUTP diphosphatase"/>
    <property type="match status" value="1"/>
</dbReference>
<dbReference type="Gene3D" id="2.70.40.10">
    <property type="match status" value="1"/>
</dbReference>
<dbReference type="HAMAP" id="MF_00116">
    <property type="entry name" value="dUTPase_bact"/>
    <property type="match status" value="1"/>
</dbReference>
<dbReference type="InterPro" id="IPR008181">
    <property type="entry name" value="dUTPase"/>
</dbReference>
<dbReference type="InterPro" id="IPR029054">
    <property type="entry name" value="dUTPase-like"/>
</dbReference>
<dbReference type="InterPro" id="IPR036157">
    <property type="entry name" value="dUTPase-like_sf"/>
</dbReference>
<dbReference type="InterPro" id="IPR033704">
    <property type="entry name" value="dUTPase_trimeric"/>
</dbReference>
<dbReference type="NCBIfam" id="TIGR00576">
    <property type="entry name" value="dut"/>
    <property type="match status" value="1"/>
</dbReference>
<dbReference type="NCBIfam" id="NF001862">
    <property type="entry name" value="PRK00601.1"/>
    <property type="match status" value="1"/>
</dbReference>
<dbReference type="PANTHER" id="PTHR11241">
    <property type="entry name" value="DEOXYURIDINE 5'-TRIPHOSPHATE NUCLEOTIDOHYDROLASE"/>
    <property type="match status" value="1"/>
</dbReference>
<dbReference type="PANTHER" id="PTHR11241:SF0">
    <property type="entry name" value="DEOXYURIDINE 5'-TRIPHOSPHATE NUCLEOTIDOHYDROLASE"/>
    <property type="match status" value="1"/>
</dbReference>
<dbReference type="Pfam" id="PF00692">
    <property type="entry name" value="dUTPase"/>
    <property type="match status" value="1"/>
</dbReference>
<dbReference type="SUPFAM" id="SSF51283">
    <property type="entry name" value="dUTPase-like"/>
    <property type="match status" value="1"/>
</dbReference>